<protein>
    <recommendedName>
        <fullName evidence="9">mRNA decay activator protein ZFP36L2-B</fullName>
    </recommendedName>
    <alternativeName>
        <fullName evidence="8">CCCH zinc finger protein 3-B</fullName>
        <shortName evidence="8">XC3H-3b</shortName>
    </alternativeName>
    <alternativeName>
        <fullName>Zinc finger protein 36, C3H1 type-like 2-B</fullName>
    </alternativeName>
</protein>
<comment type="function">
    <text evidence="1 2 3 6 7">Zinc-finger RNA-binding protein that destabilizes several cytoplasmic AU-rich element (ARE)-containing mRNA transcripts by promoting their poly(A) tail removal or deadenylation, and hence provide a mechanism for attenuating protein synthesis (PubMed:10751406). Acts as a 3'-untranslated region (UTR) ARE mRNA-binding adapter protein to communicate signaling events to the mRNA decay machinery (By similarity). Functions by recruiting the CCR4-NOT deadenylase complex and probably other components of the cytoplasmic RNA decay machinery to the bound ARE-containing mRNAs, and hence promotes ARE-mediated mRNA deadenylation and decay processes (By similarity). Binds to 3'-UTR ARE of numerous mRNAs (PubMed:12914788). Also induces the degradation of ARE-containing mRNAs even in absence of poly(A) tail (By similarity). Required for tubulogenesis during pronephros development (PubMed:12914788).</text>
</comment>
<comment type="subcellular location">
    <subcellularLocation>
        <location evidence="1">Nucleus</location>
    </subcellularLocation>
    <subcellularLocation>
        <location evidence="1">Cytoplasm</location>
    </subcellularLocation>
    <text evidence="1">Shuttles between the nucleus and the cytoplasm in a XPO1/CRM1-dependent manner.</text>
</comment>
<comment type="tissue specificity">
    <text evidence="7">Remains unlocalized in the egg and early embryo. From stage 21 (late neurula), expressed around the pronephros in the anterior crests, pharyngeal arch, hindbrain, mesodermal tissues around the pronephros and tail-bud. This expression pattern is maintained up to the tadpole stage.</text>
</comment>
<comment type="developmental stage">
    <text evidence="7">Expressed both maternally and zygotically. Expressed in the unfertilized egg, with expression increasing from embryonic stage 12 up to the tadpole stage.</text>
</comment>
<comment type="PTM">
    <text evidence="1 2">Phosphorylated (By similarity).</text>
</comment>
<comment type="sequence caution" evidence="9">
    <conflict type="miscellaneous discrepancy">
        <sequence resource="EMBL-CDS" id="AAD24209"/>
    </conflict>
    <text>Probable hybrid of the A and B paralogous sequences.</text>
</comment>
<comment type="sequence caution" evidence="9">
    <conflict type="erroneous initiation">
        <sequence resource="EMBL-CDS" id="AAH84221"/>
    </conflict>
    <text>Truncated N-terminus.</text>
</comment>
<organism>
    <name type="scientific">Xenopus laevis</name>
    <name type="common">African clawed frog</name>
    <dbReference type="NCBI Taxonomy" id="8355"/>
    <lineage>
        <taxon>Eukaryota</taxon>
        <taxon>Metazoa</taxon>
        <taxon>Chordata</taxon>
        <taxon>Craniata</taxon>
        <taxon>Vertebrata</taxon>
        <taxon>Euteleostomi</taxon>
        <taxon>Amphibia</taxon>
        <taxon>Batrachia</taxon>
        <taxon>Anura</taxon>
        <taxon>Pipoidea</taxon>
        <taxon>Pipidae</taxon>
        <taxon>Xenopodinae</taxon>
        <taxon>Xenopus</taxon>
        <taxon>Xenopus</taxon>
    </lineage>
</organism>
<proteinExistence type="evidence at protein level"/>
<gene>
    <name type="primary">zfp36l2-B</name>
    <name evidence="13" type="synonym">zfp36l2</name>
</gene>
<sequence length="364" mass="40329">MSTTLLSAFYDIDLLYKNEKALNNLALSTMLDKKAVGSPVSSTNSNLFPGFLRRHSATNLQALSGSTNLAKFCPNNNNNPLKDPAVSSTALLNRENKFRDRSFSENGERSQHLLHLQQQQQQQKAGAQVNSTRYKTELCRPFEENGACKYGEKCQFAHGFHELRSLTRHPKYKTELCRTFHTIGFCPYGPRCHFIHNAEERRQAPGAGERPKLHHSLSFSGFPNHSLDSPLLESPTSRTPPPQSSGSLYCQELLQLNNNNPCANNAFTFSGQELGLIAPLAIHTQNQSYCRQPCSSPPLSFQPLRRVSESPVFDAPPSPPDSLSDRDSYLSGSLSSGSLSGSDSPTLDSNRRLPIFSRLSISDD</sequence>
<feature type="chain" id="PRO_0000397914" description="mRNA decay activator protein ZFP36L2-B">
    <location>
        <begin position="1"/>
        <end position="364"/>
    </location>
</feature>
<feature type="zinc finger region" description="C3H1-type 1" evidence="4">
    <location>
        <begin position="133"/>
        <end position="161"/>
    </location>
</feature>
<feature type="zinc finger region" description="C3H1-type 2" evidence="4">
    <location>
        <begin position="171"/>
        <end position="199"/>
    </location>
</feature>
<feature type="region of interest" description="Disordered" evidence="5">
    <location>
        <begin position="102"/>
        <end position="129"/>
    </location>
</feature>
<feature type="region of interest" description="RNA-binding" evidence="2">
    <location>
        <begin position="150"/>
        <end position="191"/>
    </location>
</feature>
<feature type="region of interest" description="Disordered" evidence="5">
    <location>
        <begin position="308"/>
        <end position="350"/>
    </location>
</feature>
<feature type="short sequence motif" description="RNA-binding" evidence="2">
    <location>
        <begin position="133"/>
        <end position="138"/>
    </location>
</feature>
<feature type="compositionally biased region" description="Basic and acidic residues" evidence="5">
    <location>
        <begin position="102"/>
        <end position="111"/>
    </location>
</feature>
<feature type="compositionally biased region" description="Low complexity" evidence="5">
    <location>
        <begin position="113"/>
        <end position="123"/>
    </location>
</feature>
<feature type="compositionally biased region" description="Low complexity" evidence="5">
    <location>
        <begin position="329"/>
        <end position="348"/>
    </location>
</feature>
<keyword id="KW-0963">Cytoplasm</keyword>
<keyword id="KW-0217">Developmental protein</keyword>
<keyword id="KW-0479">Metal-binding</keyword>
<keyword id="KW-0539">Nucleus</keyword>
<keyword id="KW-1185">Reference proteome</keyword>
<keyword id="KW-0677">Repeat</keyword>
<keyword id="KW-0687">Ribonucleoprotein</keyword>
<keyword id="KW-0694">RNA-binding</keyword>
<keyword id="KW-0862">Zinc</keyword>
<keyword id="KW-0863">Zinc-finger</keyword>
<evidence type="ECO:0000250" key="1">
    <source>
        <dbReference type="UniProtKB" id="P23949"/>
    </source>
</evidence>
<evidence type="ECO:0000250" key="2">
    <source>
        <dbReference type="UniProtKB" id="P47974"/>
    </source>
</evidence>
<evidence type="ECO:0000250" key="3">
    <source>
        <dbReference type="UniProtKB" id="Q7ZXW9"/>
    </source>
</evidence>
<evidence type="ECO:0000255" key="4">
    <source>
        <dbReference type="PROSITE-ProRule" id="PRU00723"/>
    </source>
</evidence>
<evidence type="ECO:0000256" key="5">
    <source>
        <dbReference type="SAM" id="MobiDB-lite"/>
    </source>
</evidence>
<evidence type="ECO:0000269" key="6">
    <source>
    </source>
</evidence>
<evidence type="ECO:0000269" key="7">
    <source>
    </source>
</evidence>
<evidence type="ECO:0000303" key="8">
    <source>
    </source>
</evidence>
<evidence type="ECO:0000305" key="9"/>
<evidence type="ECO:0000312" key="10">
    <source>
        <dbReference type="EMBL" id="AAD24209.1"/>
    </source>
</evidence>
<evidence type="ECO:0000312" key="11">
    <source>
        <dbReference type="EMBL" id="AAH84221.1"/>
    </source>
</evidence>
<evidence type="ECO:0000312" key="12">
    <source>
        <dbReference type="EMBL" id="BAC54909.1"/>
    </source>
</evidence>
<evidence type="ECO:0000312" key="13">
    <source>
        <dbReference type="Xenbase" id="XB-GENE-971016"/>
    </source>
</evidence>
<accession>Q805B4</accession>
<accession>Q5XH52</accession>
<accession>Q9W673</accession>
<reference evidence="9 12" key="1">
    <citation type="journal article" date="2003" name="Biochem. Biophys. Res. Commun.">
        <title>The isolation and characterization of XC3H-3b: a CCCH zinc-finger protein required for pronephros development.</title>
        <authorList>
            <person name="Kaneko T."/>
            <person name="Chan T."/>
            <person name="Satow R."/>
            <person name="Fujita T."/>
            <person name="Asashima M."/>
        </authorList>
    </citation>
    <scope>NUCLEOTIDE SEQUENCE [MRNA]</scope>
    <scope>FUNCTION</scope>
    <scope>TISSUE SPECIFICITY</scope>
    <scope>DEVELOPMENTAL STAGE</scope>
    <source>
        <tissue evidence="7">Neurula</tissue>
    </source>
</reference>
<reference evidence="11" key="2">
    <citation type="submission" date="2004-10" db="EMBL/GenBank/DDBJ databases">
        <authorList>
            <consortium name="NIH - Xenopus Gene Collection (XGC) project"/>
        </authorList>
    </citation>
    <scope>NUCLEOTIDE SEQUENCE [LARGE SCALE MRNA]</scope>
    <source>
        <tissue evidence="11">Tail bud</tissue>
    </source>
</reference>
<reference evidence="9 10" key="3">
    <citation type="journal article" date="1999" name="Gene">
        <title>Identification of four CCCH zinc finger proteins in Xenopus, including a novel vertebrate protein with four zinc fingers and severely restricted expression.</title>
        <authorList>
            <person name="De J."/>
            <person name="Lai W.S."/>
            <person name="Thorn J.M."/>
            <person name="Goldsworthy S.M."/>
            <person name="Liu X."/>
            <person name="Blackwell T.K."/>
            <person name="Blackshear P.J."/>
        </authorList>
    </citation>
    <scope>NUCLEOTIDE SEQUENCE [MRNA] OF C-TERMINUS</scope>
    <source>
        <tissue evidence="10">Kidney</tissue>
    </source>
</reference>
<reference key="4">
    <citation type="journal article" date="2000" name="J. Biol. Chem.">
        <title>Interactions of CCCH zinc finger proteins with mRNA. Binding of tristetraprolin-related zinc finger proteins to Au-rich elements and destabilization of mRNA.</title>
        <authorList>
            <person name="Lai W.S."/>
            <person name="Carballo E."/>
            <person name="Thorn J.M."/>
            <person name="Kennington E.A."/>
            <person name="Blackshear P.J."/>
        </authorList>
    </citation>
    <scope>FUNCTION</scope>
    <scope>RNA-BINDING</scope>
</reference>
<name>TISDB_XENLA</name>
<dbReference type="EMBL" id="AB097482">
    <property type="protein sequence ID" value="BAC54909.1"/>
    <property type="molecule type" value="mRNA"/>
</dbReference>
<dbReference type="EMBL" id="BC084221">
    <property type="protein sequence ID" value="AAH84221.1"/>
    <property type="status" value="ALT_INIT"/>
    <property type="molecule type" value="mRNA"/>
</dbReference>
<dbReference type="EMBL" id="AF061982">
    <property type="protein sequence ID" value="AAD24209.1"/>
    <property type="status" value="ALT_SEQ"/>
    <property type="molecule type" value="mRNA"/>
</dbReference>
<dbReference type="RefSeq" id="NP_001081886.1">
    <property type="nucleotide sequence ID" value="NM_001088417.1"/>
</dbReference>
<dbReference type="SMR" id="Q805B4"/>
<dbReference type="GeneID" id="398103"/>
<dbReference type="KEGG" id="xla:398103"/>
<dbReference type="AGR" id="Xenbase:XB-GENE-971016"/>
<dbReference type="CTD" id="398103"/>
<dbReference type="Xenbase" id="XB-GENE-971016">
    <property type="gene designation" value="zfp36l2.L"/>
</dbReference>
<dbReference type="OMA" id="AFYDMDM"/>
<dbReference type="OrthoDB" id="410307at2759"/>
<dbReference type="Proteomes" id="UP000186698">
    <property type="component" value="Chromosome 5L"/>
</dbReference>
<dbReference type="GO" id="GO:0005737">
    <property type="term" value="C:cytoplasm"/>
    <property type="evidence" value="ECO:0000250"/>
    <property type="project" value="UniProtKB"/>
</dbReference>
<dbReference type="GO" id="GO:0005634">
    <property type="term" value="C:nucleus"/>
    <property type="evidence" value="ECO:0000250"/>
    <property type="project" value="UniProtKB"/>
</dbReference>
<dbReference type="GO" id="GO:1990904">
    <property type="term" value="C:ribonucleoprotein complex"/>
    <property type="evidence" value="ECO:0007669"/>
    <property type="project" value="UniProtKB-KW"/>
</dbReference>
<dbReference type="GO" id="GO:0035925">
    <property type="term" value="F:mRNA 3'-UTR AU-rich region binding"/>
    <property type="evidence" value="ECO:0000250"/>
    <property type="project" value="UniProtKB"/>
</dbReference>
<dbReference type="GO" id="GO:0008270">
    <property type="term" value="F:zinc ion binding"/>
    <property type="evidence" value="ECO:0007669"/>
    <property type="project" value="UniProtKB-KW"/>
</dbReference>
<dbReference type="GO" id="GO:0061158">
    <property type="term" value="P:3'-UTR-mediated mRNA destabilization"/>
    <property type="evidence" value="ECO:0000250"/>
    <property type="project" value="UniProtKB"/>
</dbReference>
<dbReference type="GO" id="GO:0071364">
    <property type="term" value="P:cellular response to epidermal growth factor stimulus"/>
    <property type="evidence" value="ECO:0000250"/>
    <property type="project" value="UniProtKB"/>
</dbReference>
<dbReference type="GO" id="GO:0044344">
    <property type="term" value="P:cellular response to fibroblast growth factor stimulus"/>
    <property type="evidence" value="ECO:0000250"/>
    <property type="project" value="UniProtKB"/>
</dbReference>
<dbReference type="GO" id="GO:0071385">
    <property type="term" value="P:cellular response to glucocorticoid stimulus"/>
    <property type="evidence" value="ECO:0000250"/>
    <property type="project" value="UniProtKB"/>
</dbReference>
<dbReference type="GO" id="GO:0097011">
    <property type="term" value="P:cellular response to granulocyte macrophage colony-stimulating factor stimulus"/>
    <property type="evidence" value="ECO:0000250"/>
    <property type="project" value="UniProtKB"/>
</dbReference>
<dbReference type="GO" id="GO:0071560">
    <property type="term" value="P:cellular response to transforming growth factor beta stimulus"/>
    <property type="evidence" value="ECO:0000250"/>
    <property type="project" value="UniProtKB"/>
</dbReference>
<dbReference type="GO" id="GO:0071356">
    <property type="term" value="P:cellular response to tumor necrosis factor"/>
    <property type="evidence" value="ECO:0000250"/>
    <property type="project" value="UniProtKB"/>
</dbReference>
<dbReference type="GO" id="GO:0060216">
    <property type="term" value="P:definitive hemopoiesis"/>
    <property type="evidence" value="ECO:0000250"/>
    <property type="project" value="UniProtKB"/>
</dbReference>
<dbReference type="GO" id="GO:0070371">
    <property type="term" value="P:ERK1 and ERK2 cascade"/>
    <property type="evidence" value="ECO:0000250"/>
    <property type="project" value="UniProtKB"/>
</dbReference>
<dbReference type="GO" id="GO:0030097">
    <property type="term" value="P:hemopoiesis"/>
    <property type="evidence" value="ECO:0000250"/>
    <property type="project" value="UniProtKB"/>
</dbReference>
<dbReference type="GO" id="GO:0000165">
    <property type="term" value="P:MAPK cascade"/>
    <property type="evidence" value="ECO:0000250"/>
    <property type="project" value="UniProtKB"/>
</dbReference>
<dbReference type="GO" id="GO:0006402">
    <property type="term" value="P:mRNA catabolic process"/>
    <property type="evidence" value="ECO:0000250"/>
    <property type="project" value="UniProtKB"/>
</dbReference>
<dbReference type="GO" id="GO:0045599">
    <property type="term" value="P:negative regulation of fat cell differentiation"/>
    <property type="evidence" value="ECO:0000250"/>
    <property type="project" value="UniProtKB"/>
</dbReference>
<dbReference type="GO" id="GO:1901991">
    <property type="term" value="P:negative regulation of mitotic cell cycle phase transition"/>
    <property type="evidence" value="ECO:0000250"/>
    <property type="project" value="UniProtKB"/>
</dbReference>
<dbReference type="GO" id="GO:2000737">
    <property type="term" value="P:negative regulation of stem cell differentiation"/>
    <property type="evidence" value="ECO:0000250"/>
    <property type="project" value="UniProtKB"/>
</dbReference>
<dbReference type="GO" id="GO:0072080">
    <property type="term" value="P:nephron tubule development"/>
    <property type="evidence" value="ECO:0000315"/>
    <property type="project" value="UniProtKB"/>
</dbReference>
<dbReference type="GO" id="GO:0000288">
    <property type="term" value="P:nuclear-transcribed mRNA catabolic process, deadenylation-dependent decay"/>
    <property type="evidence" value="ECO:0000250"/>
    <property type="project" value="UniProtKB"/>
</dbReference>
<dbReference type="GO" id="GO:0031086">
    <property type="term" value="P:nuclear-transcribed mRNA catabolic process, deadenylation-independent decay"/>
    <property type="evidence" value="ECO:0000250"/>
    <property type="project" value="UniProtKB"/>
</dbReference>
<dbReference type="GO" id="GO:1900153">
    <property type="term" value="P:positive regulation of nuclear-transcribed mRNA catabolic process, deadenylation-dependent decay"/>
    <property type="evidence" value="ECO:0000250"/>
    <property type="project" value="UniProtKB"/>
</dbReference>
<dbReference type="GO" id="GO:0039020">
    <property type="term" value="P:pronephric nephron tubule development"/>
    <property type="evidence" value="ECO:0000315"/>
    <property type="project" value="UniProtKB"/>
</dbReference>
<dbReference type="GO" id="GO:0048793">
    <property type="term" value="P:pronephros development"/>
    <property type="evidence" value="ECO:0000315"/>
    <property type="project" value="UniProtKB"/>
</dbReference>
<dbReference type="GO" id="GO:0045577">
    <property type="term" value="P:regulation of B cell differentiation"/>
    <property type="evidence" value="ECO:0000250"/>
    <property type="project" value="UniProtKB"/>
</dbReference>
<dbReference type="GO" id="GO:0043488">
    <property type="term" value="P:regulation of mRNA stability"/>
    <property type="evidence" value="ECO:0000250"/>
    <property type="project" value="UniProtKB"/>
</dbReference>
<dbReference type="GO" id="GO:0048103">
    <property type="term" value="P:somatic stem cell division"/>
    <property type="evidence" value="ECO:0000250"/>
    <property type="project" value="UniProtKB"/>
</dbReference>
<dbReference type="GO" id="GO:0035019">
    <property type="term" value="P:somatic stem cell population maintenance"/>
    <property type="evidence" value="ECO:0000250"/>
    <property type="project" value="UniProtKB"/>
</dbReference>
<dbReference type="FunFam" id="4.10.1000.10:FF:000001">
    <property type="entry name" value="zinc finger CCCH domain-containing protein 15-like"/>
    <property type="match status" value="1"/>
</dbReference>
<dbReference type="FunFam" id="4.10.1000.10:FF:000002">
    <property type="entry name" value="Zinc finger protein 36, C3H1 type-like 1"/>
    <property type="match status" value="1"/>
</dbReference>
<dbReference type="Gene3D" id="4.10.1000.10">
    <property type="entry name" value="Zinc finger, CCCH-type"/>
    <property type="match status" value="2"/>
</dbReference>
<dbReference type="InterPro" id="IPR007635">
    <property type="entry name" value="Tis11B_N"/>
</dbReference>
<dbReference type="InterPro" id="IPR045877">
    <property type="entry name" value="ZFP36-like"/>
</dbReference>
<dbReference type="InterPro" id="IPR000571">
    <property type="entry name" value="Znf_CCCH"/>
</dbReference>
<dbReference type="InterPro" id="IPR036855">
    <property type="entry name" value="Znf_CCCH_sf"/>
</dbReference>
<dbReference type="PANTHER" id="PTHR12547">
    <property type="entry name" value="CCCH ZINC FINGER/TIS11-RELATED"/>
    <property type="match status" value="1"/>
</dbReference>
<dbReference type="PANTHER" id="PTHR12547:SF174">
    <property type="entry name" value="MRNA DECAY ACTIVATOR PROTEIN ZFP36L2"/>
    <property type="match status" value="1"/>
</dbReference>
<dbReference type="Pfam" id="PF04553">
    <property type="entry name" value="Tis11B_N"/>
    <property type="match status" value="1"/>
</dbReference>
<dbReference type="Pfam" id="PF00642">
    <property type="entry name" value="zf-CCCH"/>
    <property type="match status" value="2"/>
</dbReference>
<dbReference type="SMART" id="SM00356">
    <property type="entry name" value="ZnF_C3H1"/>
    <property type="match status" value="2"/>
</dbReference>
<dbReference type="SUPFAM" id="SSF90229">
    <property type="entry name" value="CCCH zinc finger"/>
    <property type="match status" value="2"/>
</dbReference>
<dbReference type="PROSITE" id="PS50103">
    <property type="entry name" value="ZF_C3H1"/>
    <property type="match status" value="2"/>
</dbReference>